<evidence type="ECO:0000255" key="1">
    <source>
        <dbReference type="HAMAP-Rule" id="MF_01031"/>
    </source>
</evidence>
<proteinExistence type="inferred from homology"/>
<gene>
    <name evidence="1" type="primary">leuD</name>
    <name type="ordered locus">BPSS1706</name>
</gene>
<name>LEUD_BURPS</name>
<comment type="function">
    <text evidence="1">Catalyzes the isomerization between 2-isopropylmalate and 3-isopropylmalate, via the formation of 2-isopropylmaleate.</text>
</comment>
<comment type="catalytic activity">
    <reaction evidence="1">
        <text>(2R,3S)-3-isopropylmalate = (2S)-2-isopropylmalate</text>
        <dbReference type="Rhea" id="RHEA:32287"/>
        <dbReference type="ChEBI" id="CHEBI:1178"/>
        <dbReference type="ChEBI" id="CHEBI:35121"/>
        <dbReference type="EC" id="4.2.1.33"/>
    </reaction>
</comment>
<comment type="pathway">
    <text evidence="1">Amino-acid biosynthesis; L-leucine biosynthesis; L-leucine from 3-methyl-2-oxobutanoate: step 2/4.</text>
</comment>
<comment type="subunit">
    <text evidence="1">Heterodimer of LeuC and LeuD.</text>
</comment>
<comment type="similarity">
    <text evidence="1">Belongs to the LeuD family. LeuD type 1 subfamily.</text>
</comment>
<accession>Q63JL1</accession>
<keyword id="KW-0028">Amino-acid biosynthesis</keyword>
<keyword id="KW-0100">Branched-chain amino acid biosynthesis</keyword>
<keyword id="KW-0432">Leucine biosynthesis</keyword>
<keyword id="KW-0456">Lyase</keyword>
<keyword id="KW-1185">Reference proteome</keyword>
<organism>
    <name type="scientific">Burkholderia pseudomallei (strain K96243)</name>
    <dbReference type="NCBI Taxonomy" id="272560"/>
    <lineage>
        <taxon>Bacteria</taxon>
        <taxon>Pseudomonadati</taxon>
        <taxon>Pseudomonadota</taxon>
        <taxon>Betaproteobacteria</taxon>
        <taxon>Burkholderiales</taxon>
        <taxon>Burkholderiaceae</taxon>
        <taxon>Burkholderia</taxon>
        <taxon>pseudomallei group</taxon>
    </lineage>
</organism>
<feature type="chain" id="PRO_0000141806" description="3-isopropylmalate dehydratase small subunit">
    <location>
        <begin position="1"/>
        <end position="216"/>
    </location>
</feature>
<reference key="1">
    <citation type="journal article" date="2004" name="Proc. Natl. Acad. Sci. U.S.A.">
        <title>Genomic plasticity of the causative agent of melioidosis, Burkholderia pseudomallei.</title>
        <authorList>
            <person name="Holden M.T.G."/>
            <person name="Titball R.W."/>
            <person name="Peacock S.J."/>
            <person name="Cerdeno-Tarraga A.-M."/>
            <person name="Atkins T."/>
            <person name="Crossman L.C."/>
            <person name="Pitt T."/>
            <person name="Churcher C."/>
            <person name="Mungall K.L."/>
            <person name="Bentley S.D."/>
            <person name="Sebaihia M."/>
            <person name="Thomson N.R."/>
            <person name="Bason N."/>
            <person name="Beacham I.R."/>
            <person name="Brooks K."/>
            <person name="Brown K.A."/>
            <person name="Brown N.F."/>
            <person name="Challis G.L."/>
            <person name="Cherevach I."/>
            <person name="Chillingworth T."/>
            <person name="Cronin A."/>
            <person name="Crossett B."/>
            <person name="Davis P."/>
            <person name="DeShazer D."/>
            <person name="Feltwell T."/>
            <person name="Fraser A."/>
            <person name="Hance Z."/>
            <person name="Hauser H."/>
            <person name="Holroyd S."/>
            <person name="Jagels K."/>
            <person name="Keith K.E."/>
            <person name="Maddison M."/>
            <person name="Moule S."/>
            <person name="Price C."/>
            <person name="Quail M.A."/>
            <person name="Rabbinowitsch E."/>
            <person name="Rutherford K."/>
            <person name="Sanders M."/>
            <person name="Simmonds M."/>
            <person name="Songsivilai S."/>
            <person name="Stevens K."/>
            <person name="Tumapa S."/>
            <person name="Vesaratchavest M."/>
            <person name="Whitehead S."/>
            <person name="Yeats C."/>
            <person name="Barrell B.G."/>
            <person name="Oyston P.C.F."/>
            <person name="Parkhill J."/>
        </authorList>
    </citation>
    <scope>NUCLEOTIDE SEQUENCE [LARGE SCALE GENOMIC DNA]</scope>
    <source>
        <strain>K96243</strain>
    </source>
</reference>
<protein>
    <recommendedName>
        <fullName evidence="1">3-isopropylmalate dehydratase small subunit</fullName>
        <ecNumber evidence="1">4.2.1.33</ecNumber>
    </recommendedName>
    <alternativeName>
        <fullName evidence="1">Alpha-IPM isomerase</fullName>
        <shortName evidence="1">IPMI</shortName>
    </alternativeName>
    <alternativeName>
        <fullName evidence="1">Isopropylmalate isomerase</fullName>
    </alternativeName>
</protein>
<sequence>MEKFNVHTGVVAPLDRENVDTDAIIPKQFLKSIKRTGFGPNAFDEWRYLDHGEPGQDNSKRPLNPDFVLNQPRYQGASVLLARKNFGCGSSREHAPWALQQYGFRAIVAPSFADIFFNNCYKNGLLPIVLTEQQVDHLFNDTYAFNGYQLTIDLDAQVVRAPDGREYPFEITAFRKYCLLNGFDDIGLTLRHADKIRQFEAERLAKQPWLDNRLVG</sequence>
<dbReference type="EC" id="4.2.1.33" evidence="1"/>
<dbReference type="EMBL" id="BX571966">
    <property type="protein sequence ID" value="CAH39179.1"/>
    <property type="molecule type" value="Genomic_DNA"/>
</dbReference>
<dbReference type="RefSeq" id="WP_004187882.1">
    <property type="nucleotide sequence ID" value="NZ_CP009537.1"/>
</dbReference>
<dbReference type="RefSeq" id="YP_111711.1">
    <property type="nucleotide sequence ID" value="NC_006351.1"/>
</dbReference>
<dbReference type="SMR" id="Q63JL1"/>
<dbReference type="STRING" id="272560.BPSS1706"/>
<dbReference type="GeneID" id="93063904"/>
<dbReference type="KEGG" id="bps:BPSS1706"/>
<dbReference type="PATRIC" id="fig|272560.51.peg.5118"/>
<dbReference type="eggNOG" id="COG0066">
    <property type="taxonomic scope" value="Bacteria"/>
</dbReference>
<dbReference type="UniPathway" id="UPA00048">
    <property type="reaction ID" value="UER00071"/>
</dbReference>
<dbReference type="Proteomes" id="UP000000605">
    <property type="component" value="Chromosome 2"/>
</dbReference>
<dbReference type="GO" id="GO:0009316">
    <property type="term" value="C:3-isopropylmalate dehydratase complex"/>
    <property type="evidence" value="ECO:0007669"/>
    <property type="project" value="InterPro"/>
</dbReference>
<dbReference type="GO" id="GO:0003861">
    <property type="term" value="F:3-isopropylmalate dehydratase activity"/>
    <property type="evidence" value="ECO:0007669"/>
    <property type="project" value="UniProtKB-UniRule"/>
</dbReference>
<dbReference type="GO" id="GO:0009098">
    <property type="term" value="P:L-leucine biosynthetic process"/>
    <property type="evidence" value="ECO:0007669"/>
    <property type="project" value="UniProtKB-UniRule"/>
</dbReference>
<dbReference type="CDD" id="cd01577">
    <property type="entry name" value="IPMI_Swivel"/>
    <property type="match status" value="1"/>
</dbReference>
<dbReference type="FunFam" id="3.20.19.10:FF:000003">
    <property type="entry name" value="3-isopropylmalate dehydratase small subunit"/>
    <property type="match status" value="1"/>
</dbReference>
<dbReference type="Gene3D" id="3.20.19.10">
    <property type="entry name" value="Aconitase, domain 4"/>
    <property type="match status" value="1"/>
</dbReference>
<dbReference type="HAMAP" id="MF_01031">
    <property type="entry name" value="LeuD_type1"/>
    <property type="match status" value="1"/>
</dbReference>
<dbReference type="InterPro" id="IPR004431">
    <property type="entry name" value="3-IsopropMal_deHydase_ssu"/>
</dbReference>
<dbReference type="InterPro" id="IPR015928">
    <property type="entry name" value="Aconitase/3IPM_dehydase_swvl"/>
</dbReference>
<dbReference type="InterPro" id="IPR000573">
    <property type="entry name" value="AconitaseA/IPMdHydase_ssu_swvl"/>
</dbReference>
<dbReference type="InterPro" id="IPR033940">
    <property type="entry name" value="IPMI_Swivel"/>
</dbReference>
<dbReference type="InterPro" id="IPR050075">
    <property type="entry name" value="LeuD"/>
</dbReference>
<dbReference type="NCBIfam" id="TIGR00171">
    <property type="entry name" value="leuD"/>
    <property type="match status" value="1"/>
</dbReference>
<dbReference type="NCBIfam" id="NF002458">
    <property type="entry name" value="PRK01641.1"/>
    <property type="match status" value="1"/>
</dbReference>
<dbReference type="PANTHER" id="PTHR43345:SF5">
    <property type="entry name" value="3-ISOPROPYLMALATE DEHYDRATASE SMALL SUBUNIT"/>
    <property type="match status" value="1"/>
</dbReference>
<dbReference type="PANTHER" id="PTHR43345">
    <property type="entry name" value="3-ISOPROPYLMALATE DEHYDRATASE SMALL SUBUNIT 2-RELATED-RELATED"/>
    <property type="match status" value="1"/>
</dbReference>
<dbReference type="Pfam" id="PF00694">
    <property type="entry name" value="Aconitase_C"/>
    <property type="match status" value="1"/>
</dbReference>
<dbReference type="SUPFAM" id="SSF52016">
    <property type="entry name" value="LeuD/IlvD-like"/>
    <property type="match status" value="1"/>
</dbReference>